<sequence length="229" mass="23689">MPPAEALEALRLMAWLSPGYPVGAYAYSHGLEWAVEAGDVRDEASLTAWLRDVCERGALRNDLILAAQAHAAARTSDGAALVAVNDLALALAPSRELHLETSQQGRSFLDATRGAWPCDALAALAEELPGPVAYPVAVGLAAGAHGMAPEPVLAAYGLAFLQNLVSAALRAAPVGQAAGTRVVAALAPRLAGLAEAAAASDLDALGAATFRLDLGSFRHETQYSRIFRS</sequence>
<evidence type="ECO:0000255" key="1">
    <source>
        <dbReference type="HAMAP-Rule" id="MF_01385"/>
    </source>
</evidence>
<protein>
    <recommendedName>
        <fullName evidence="1">Urease accessory protein UreF</fullName>
    </recommendedName>
</protein>
<organism>
    <name type="scientific">Methylobacterium radiotolerans (strain ATCC 27329 / DSM 1819 / JCM 2831 / NBRC 15690 / NCIMB 10815 / 0-1)</name>
    <dbReference type="NCBI Taxonomy" id="426355"/>
    <lineage>
        <taxon>Bacteria</taxon>
        <taxon>Pseudomonadati</taxon>
        <taxon>Pseudomonadota</taxon>
        <taxon>Alphaproteobacteria</taxon>
        <taxon>Hyphomicrobiales</taxon>
        <taxon>Methylobacteriaceae</taxon>
        <taxon>Methylobacterium</taxon>
    </lineage>
</organism>
<reference key="1">
    <citation type="submission" date="2008-03" db="EMBL/GenBank/DDBJ databases">
        <title>Complete sequence of chromosome of Methylobacterium radiotolerans JCM 2831.</title>
        <authorList>
            <consortium name="US DOE Joint Genome Institute"/>
            <person name="Copeland A."/>
            <person name="Lucas S."/>
            <person name="Lapidus A."/>
            <person name="Glavina del Rio T."/>
            <person name="Dalin E."/>
            <person name="Tice H."/>
            <person name="Bruce D."/>
            <person name="Goodwin L."/>
            <person name="Pitluck S."/>
            <person name="Kiss H."/>
            <person name="Brettin T."/>
            <person name="Detter J.C."/>
            <person name="Han C."/>
            <person name="Kuske C.R."/>
            <person name="Schmutz J."/>
            <person name="Larimer F."/>
            <person name="Land M."/>
            <person name="Hauser L."/>
            <person name="Kyrpides N."/>
            <person name="Mikhailova N."/>
            <person name="Marx C.J."/>
            <person name="Richardson P."/>
        </authorList>
    </citation>
    <scope>NUCLEOTIDE SEQUENCE [LARGE SCALE GENOMIC DNA]</scope>
    <source>
        <strain>ATCC 27329 / DSM 1819 / JCM 2831 / NBRC 15690 / NCIMB 10815 / 0-1</strain>
    </source>
</reference>
<dbReference type="EMBL" id="CP001001">
    <property type="protein sequence ID" value="ACB24850.1"/>
    <property type="molecule type" value="Genomic_DNA"/>
</dbReference>
<dbReference type="SMR" id="B1M3X3"/>
<dbReference type="STRING" id="426355.Mrad2831_2866"/>
<dbReference type="KEGG" id="mrd:Mrad2831_2866"/>
<dbReference type="eggNOG" id="COG0830">
    <property type="taxonomic scope" value="Bacteria"/>
</dbReference>
<dbReference type="HOGENOM" id="CLU_049215_2_0_5"/>
<dbReference type="OrthoDB" id="9798772at2"/>
<dbReference type="Proteomes" id="UP000006589">
    <property type="component" value="Chromosome"/>
</dbReference>
<dbReference type="GO" id="GO:0005737">
    <property type="term" value="C:cytoplasm"/>
    <property type="evidence" value="ECO:0007669"/>
    <property type="project" value="UniProtKB-SubCell"/>
</dbReference>
<dbReference type="GO" id="GO:0016151">
    <property type="term" value="F:nickel cation binding"/>
    <property type="evidence" value="ECO:0007669"/>
    <property type="project" value="UniProtKB-UniRule"/>
</dbReference>
<dbReference type="Gene3D" id="1.10.4190.10">
    <property type="entry name" value="Urease accessory protein UreF"/>
    <property type="match status" value="1"/>
</dbReference>
<dbReference type="HAMAP" id="MF_01385">
    <property type="entry name" value="UreF"/>
    <property type="match status" value="1"/>
</dbReference>
<dbReference type="InterPro" id="IPR002639">
    <property type="entry name" value="UreF"/>
</dbReference>
<dbReference type="InterPro" id="IPR038277">
    <property type="entry name" value="UreF_sf"/>
</dbReference>
<dbReference type="PANTHER" id="PTHR33620">
    <property type="entry name" value="UREASE ACCESSORY PROTEIN F"/>
    <property type="match status" value="1"/>
</dbReference>
<dbReference type="PANTHER" id="PTHR33620:SF1">
    <property type="entry name" value="UREASE ACCESSORY PROTEIN F"/>
    <property type="match status" value="1"/>
</dbReference>
<dbReference type="Pfam" id="PF01730">
    <property type="entry name" value="UreF"/>
    <property type="match status" value="1"/>
</dbReference>
<dbReference type="PIRSF" id="PIRSF009467">
    <property type="entry name" value="Ureas_acces_UreF"/>
    <property type="match status" value="1"/>
</dbReference>
<feature type="chain" id="PRO_0000344136" description="Urease accessory protein UreF">
    <location>
        <begin position="1"/>
        <end position="229"/>
    </location>
</feature>
<keyword id="KW-0143">Chaperone</keyword>
<keyword id="KW-0963">Cytoplasm</keyword>
<keyword id="KW-0996">Nickel insertion</keyword>
<accession>B1M3X3</accession>
<name>UREF_METRJ</name>
<comment type="function">
    <text evidence="1">Required for maturation of urease via the functional incorporation of the urease nickel metallocenter.</text>
</comment>
<comment type="subunit">
    <text evidence="1">UreD, UreF and UreG form a complex that acts as a GTP-hydrolysis-dependent molecular chaperone, activating the urease apoprotein by helping to assemble the nickel containing metallocenter of UreC. The UreE protein probably delivers the nickel.</text>
</comment>
<comment type="subcellular location">
    <subcellularLocation>
        <location evidence="1">Cytoplasm</location>
    </subcellularLocation>
</comment>
<comment type="similarity">
    <text evidence="1">Belongs to the UreF family.</text>
</comment>
<gene>
    <name evidence="1" type="primary">ureF</name>
    <name type="ordered locus">Mrad2831_2866</name>
</gene>
<proteinExistence type="inferred from homology"/>